<accession>Q2J619</accession>
<evidence type="ECO:0000255" key="1">
    <source>
        <dbReference type="HAMAP-Rule" id="MF_00318"/>
    </source>
</evidence>
<keyword id="KW-0963">Cytoplasm</keyword>
<keyword id="KW-0324">Glycolysis</keyword>
<keyword id="KW-0456">Lyase</keyword>
<keyword id="KW-0460">Magnesium</keyword>
<keyword id="KW-0479">Metal-binding</keyword>
<keyword id="KW-1185">Reference proteome</keyword>
<keyword id="KW-0964">Secreted</keyword>
<organism>
    <name type="scientific">Frankia casuarinae (strain DSM 45818 / CECT 9043 / HFP020203 / CcI3)</name>
    <dbReference type="NCBI Taxonomy" id="106370"/>
    <lineage>
        <taxon>Bacteria</taxon>
        <taxon>Bacillati</taxon>
        <taxon>Actinomycetota</taxon>
        <taxon>Actinomycetes</taxon>
        <taxon>Frankiales</taxon>
        <taxon>Frankiaceae</taxon>
        <taxon>Frankia</taxon>
    </lineage>
</organism>
<protein>
    <recommendedName>
        <fullName evidence="1">Enolase</fullName>
        <ecNumber evidence="1">4.2.1.11</ecNumber>
    </recommendedName>
    <alternativeName>
        <fullName evidence="1">2-phospho-D-glycerate hydro-lyase</fullName>
    </alternativeName>
    <alternativeName>
        <fullName evidence="1">2-phosphoglycerate dehydratase</fullName>
    </alternativeName>
</protein>
<name>ENO_FRACC</name>
<comment type="function">
    <text evidence="1">Catalyzes the reversible conversion of 2-phosphoglycerate (2-PG) into phosphoenolpyruvate (PEP). It is essential for the degradation of carbohydrates via glycolysis.</text>
</comment>
<comment type="catalytic activity">
    <reaction evidence="1">
        <text>(2R)-2-phosphoglycerate = phosphoenolpyruvate + H2O</text>
        <dbReference type="Rhea" id="RHEA:10164"/>
        <dbReference type="ChEBI" id="CHEBI:15377"/>
        <dbReference type="ChEBI" id="CHEBI:58289"/>
        <dbReference type="ChEBI" id="CHEBI:58702"/>
        <dbReference type="EC" id="4.2.1.11"/>
    </reaction>
</comment>
<comment type="cofactor">
    <cofactor evidence="1">
        <name>Mg(2+)</name>
        <dbReference type="ChEBI" id="CHEBI:18420"/>
    </cofactor>
    <text evidence="1">Binds a second Mg(2+) ion via substrate during catalysis.</text>
</comment>
<comment type="pathway">
    <text evidence="1">Carbohydrate degradation; glycolysis; pyruvate from D-glyceraldehyde 3-phosphate: step 4/5.</text>
</comment>
<comment type="subcellular location">
    <subcellularLocation>
        <location evidence="1">Cytoplasm</location>
    </subcellularLocation>
    <subcellularLocation>
        <location evidence="1">Secreted</location>
    </subcellularLocation>
    <subcellularLocation>
        <location evidence="1">Cell surface</location>
    </subcellularLocation>
    <text evidence="1">Fractions of enolase are present in both the cytoplasm and on the cell surface.</text>
</comment>
<comment type="similarity">
    <text evidence="1">Belongs to the enolase family.</text>
</comment>
<gene>
    <name evidence="1" type="primary">eno</name>
    <name type="ordered locus">Francci3_3923</name>
</gene>
<proteinExistence type="inferred from homology"/>
<reference key="1">
    <citation type="journal article" date="2007" name="Genome Res.">
        <title>Genome characteristics of facultatively symbiotic Frankia sp. strains reflect host range and host plant biogeography.</title>
        <authorList>
            <person name="Normand P."/>
            <person name="Lapierre P."/>
            <person name="Tisa L.S."/>
            <person name="Gogarten J.P."/>
            <person name="Alloisio N."/>
            <person name="Bagnarol E."/>
            <person name="Bassi C.A."/>
            <person name="Berry A.M."/>
            <person name="Bickhart D.M."/>
            <person name="Choisne N."/>
            <person name="Couloux A."/>
            <person name="Cournoyer B."/>
            <person name="Cruveiller S."/>
            <person name="Daubin V."/>
            <person name="Demange N."/>
            <person name="Francino M.P."/>
            <person name="Goltsman E."/>
            <person name="Huang Y."/>
            <person name="Kopp O.R."/>
            <person name="Labarre L."/>
            <person name="Lapidus A."/>
            <person name="Lavire C."/>
            <person name="Marechal J."/>
            <person name="Martinez M."/>
            <person name="Mastronunzio J.E."/>
            <person name="Mullin B.C."/>
            <person name="Niemann J."/>
            <person name="Pujic P."/>
            <person name="Rawnsley T."/>
            <person name="Rouy Z."/>
            <person name="Schenowitz C."/>
            <person name="Sellstedt A."/>
            <person name="Tavares F."/>
            <person name="Tomkins J.P."/>
            <person name="Vallenet D."/>
            <person name="Valverde C."/>
            <person name="Wall L.G."/>
            <person name="Wang Y."/>
            <person name="Medigue C."/>
            <person name="Benson D.R."/>
        </authorList>
    </citation>
    <scope>NUCLEOTIDE SEQUENCE [LARGE SCALE GENOMIC DNA]</scope>
    <source>
        <strain>DSM 45818 / CECT 9043 / HFP020203 / CcI3</strain>
    </source>
</reference>
<sequence length="427" mass="44785">MPSIEAVGAREILDSRGNPTVEVEVVLEDGTLGRAAVPSGASTGAFEAVELRDGDNRYGGKGVTKAVAAVIDRIGPAIMELEATEQRLLDATLIDLDGTPGKSALGANALLGVSLAVAKAAAASSGLPLFRYLGGPTAHLLPVPMMNILNGGAHADTNVDIQEFMIAPIGASTFAESLRWGAEVYHALKSVLKARGLATGVGDEGGFAPSLPTNREALDLIAEGIDKAGFALGTDIALALDVASTEFYADGSYTFEGNSRSAEYLSDYYAELVSAYPIVSIEDPLAEDDWDGWVALTERLGGKVQLVGDDLFVTNPERLARGIALKAANALLVKVNQIGTLTETLDAVNLAHRSGYRAMMSHRSGETEDTTIADLAVAVDCGQIKTGAPARSERVAKYNQLLRIEEELDDAARYAGAAAFPRRRQAG</sequence>
<feature type="chain" id="PRO_0000267038" description="Enolase">
    <location>
        <begin position="1"/>
        <end position="427"/>
    </location>
</feature>
<feature type="active site" description="Proton donor" evidence="1">
    <location>
        <position position="204"/>
    </location>
</feature>
<feature type="active site" description="Proton acceptor" evidence="1">
    <location>
        <position position="334"/>
    </location>
</feature>
<feature type="binding site" evidence="1">
    <location>
        <position position="162"/>
    </location>
    <ligand>
        <name>(2R)-2-phosphoglycerate</name>
        <dbReference type="ChEBI" id="CHEBI:58289"/>
    </ligand>
</feature>
<feature type="binding site" evidence="1">
    <location>
        <position position="241"/>
    </location>
    <ligand>
        <name>Mg(2+)</name>
        <dbReference type="ChEBI" id="CHEBI:18420"/>
    </ligand>
</feature>
<feature type="binding site" evidence="1">
    <location>
        <position position="282"/>
    </location>
    <ligand>
        <name>Mg(2+)</name>
        <dbReference type="ChEBI" id="CHEBI:18420"/>
    </ligand>
</feature>
<feature type="binding site" evidence="1">
    <location>
        <position position="309"/>
    </location>
    <ligand>
        <name>Mg(2+)</name>
        <dbReference type="ChEBI" id="CHEBI:18420"/>
    </ligand>
</feature>
<feature type="binding site" evidence="1">
    <location>
        <position position="334"/>
    </location>
    <ligand>
        <name>(2R)-2-phosphoglycerate</name>
        <dbReference type="ChEBI" id="CHEBI:58289"/>
    </ligand>
</feature>
<feature type="binding site" evidence="1">
    <location>
        <position position="363"/>
    </location>
    <ligand>
        <name>(2R)-2-phosphoglycerate</name>
        <dbReference type="ChEBI" id="CHEBI:58289"/>
    </ligand>
</feature>
<feature type="binding site" evidence="1">
    <location>
        <position position="364"/>
    </location>
    <ligand>
        <name>(2R)-2-phosphoglycerate</name>
        <dbReference type="ChEBI" id="CHEBI:58289"/>
    </ligand>
</feature>
<feature type="binding site" evidence="1">
    <location>
        <position position="385"/>
    </location>
    <ligand>
        <name>(2R)-2-phosphoglycerate</name>
        <dbReference type="ChEBI" id="CHEBI:58289"/>
    </ligand>
</feature>
<dbReference type="EC" id="4.2.1.11" evidence="1"/>
<dbReference type="EMBL" id="CP000249">
    <property type="protein sequence ID" value="ABD13273.1"/>
    <property type="molecule type" value="Genomic_DNA"/>
</dbReference>
<dbReference type="RefSeq" id="WP_011438297.1">
    <property type="nucleotide sequence ID" value="NZ_JENI01000003.1"/>
</dbReference>
<dbReference type="SMR" id="Q2J619"/>
<dbReference type="STRING" id="106370.Francci3_3923"/>
<dbReference type="KEGG" id="fra:Francci3_3923"/>
<dbReference type="eggNOG" id="COG0148">
    <property type="taxonomic scope" value="Bacteria"/>
</dbReference>
<dbReference type="HOGENOM" id="CLU_031223_2_1_11"/>
<dbReference type="OrthoDB" id="9804716at2"/>
<dbReference type="PhylomeDB" id="Q2J619"/>
<dbReference type="UniPathway" id="UPA00109">
    <property type="reaction ID" value="UER00187"/>
</dbReference>
<dbReference type="Proteomes" id="UP000001937">
    <property type="component" value="Chromosome"/>
</dbReference>
<dbReference type="GO" id="GO:0009986">
    <property type="term" value="C:cell surface"/>
    <property type="evidence" value="ECO:0007669"/>
    <property type="project" value="UniProtKB-SubCell"/>
</dbReference>
<dbReference type="GO" id="GO:0005576">
    <property type="term" value="C:extracellular region"/>
    <property type="evidence" value="ECO:0007669"/>
    <property type="project" value="UniProtKB-SubCell"/>
</dbReference>
<dbReference type="GO" id="GO:0000015">
    <property type="term" value="C:phosphopyruvate hydratase complex"/>
    <property type="evidence" value="ECO:0007669"/>
    <property type="project" value="InterPro"/>
</dbReference>
<dbReference type="GO" id="GO:0000287">
    <property type="term" value="F:magnesium ion binding"/>
    <property type="evidence" value="ECO:0007669"/>
    <property type="project" value="UniProtKB-UniRule"/>
</dbReference>
<dbReference type="GO" id="GO:0004634">
    <property type="term" value="F:phosphopyruvate hydratase activity"/>
    <property type="evidence" value="ECO:0007669"/>
    <property type="project" value="UniProtKB-UniRule"/>
</dbReference>
<dbReference type="GO" id="GO:0006096">
    <property type="term" value="P:glycolytic process"/>
    <property type="evidence" value="ECO:0007669"/>
    <property type="project" value="UniProtKB-UniRule"/>
</dbReference>
<dbReference type="CDD" id="cd03313">
    <property type="entry name" value="enolase"/>
    <property type="match status" value="1"/>
</dbReference>
<dbReference type="FunFam" id="3.20.20.120:FF:000001">
    <property type="entry name" value="Enolase"/>
    <property type="match status" value="1"/>
</dbReference>
<dbReference type="FunFam" id="3.30.390.10:FF:000001">
    <property type="entry name" value="Enolase"/>
    <property type="match status" value="1"/>
</dbReference>
<dbReference type="Gene3D" id="3.20.20.120">
    <property type="entry name" value="Enolase-like C-terminal domain"/>
    <property type="match status" value="1"/>
</dbReference>
<dbReference type="Gene3D" id="3.30.390.10">
    <property type="entry name" value="Enolase-like, N-terminal domain"/>
    <property type="match status" value="1"/>
</dbReference>
<dbReference type="HAMAP" id="MF_00318">
    <property type="entry name" value="Enolase"/>
    <property type="match status" value="1"/>
</dbReference>
<dbReference type="InterPro" id="IPR000941">
    <property type="entry name" value="Enolase"/>
</dbReference>
<dbReference type="InterPro" id="IPR036849">
    <property type="entry name" value="Enolase-like_C_sf"/>
</dbReference>
<dbReference type="InterPro" id="IPR029017">
    <property type="entry name" value="Enolase-like_N"/>
</dbReference>
<dbReference type="InterPro" id="IPR020810">
    <property type="entry name" value="Enolase_C"/>
</dbReference>
<dbReference type="InterPro" id="IPR020809">
    <property type="entry name" value="Enolase_CS"/>
</dbReference>
<dbReference type="InterPro" id="IPR020811">
    <property type="entry name" value="Enolase_N"/>
</dbReference>
<dbReference type="NCBIfam" id="TIGR01060">
    <property type="entry name" value="eno"/>
    <property type="match status" value="1"/>
</dbReference>
<dbReference type="PANTHER" id="PTHR11902">
    <property type="entry name" value="ENOLASE"/>
    <property type="match status" value="1"/>
</dbReference>
<dbReference type="PANTHER" id="PTHR11902:SF1">
    <property type="entry name" value="ENOLASE"/>
    <property type="match status" value="1"/>
</dbReference>
<dbReference type="Pfam" id="PF00113">
    <property type="entry name" value="Enolase_C"/>
    <property type="match status" value="1"/>
</dbReference>
<dbReference type="Pfam" id="PF03952">
    <property type="entry name" value="Enolase_N"/>
    <property type="match status" value="1"/>
</dbReference>
<dbReference type="PIRSF" id="PIRSF001400">
    <property type="entry name" value="Enolase"/>
    <property type="match status" value="1"/>
</dbReference>
<dbReference type="PRINTS" id="PR00148">
    <property type="entry name" value="ENOLASE"/>
</dbReference>
<dbReference type="SFLD" id="SFLDS00001">
    <property type="entry name" value="Enolase"/>
    <property type="match status" value="1"/>
</dbReference>
<dbReference type="SFLD" id="SFLDF00002">
    <property type="entry name" value="enolase"/>
    <property type="match status" value="1"/>
</dbReference>
<dbReference type="SMART" id="SM01192">
    <property type="entry name" value="Enolase_C"/>
    <property type="match status" value="1"/>
</dbReference>
<dbReference type="SMART" id="SM01193">
    <property type="entry name" value="Enolase_N"/>
    <property type="match status" value="1"/>
</dbReference>
<dbReference type="SUPFAM" id="SSF51604">
    <property type="entry name" value="Enolase C-terminal domain-like"/>
    <property type="match status" value="1"/>
</dbReference>
<dbReference type="SUPFAM" id="SSF54826">
    <property type="entry name" value="Enolase N-terminal domain-like"/>
    <property type="match status" value="1"/>
</dbReference>
<dbReference type="PROSITE" id="PS00164">
    <property type="entry name" value="ENOLASE"/>
    <property type="match status" value="1"/>
</dbReference>